<protein>
    <recommendedName>
        <fullName evidence="2">Sulfate adenylyltransferase subunit 1</fullName>
        <ecNumber evidence="2">2.7.7.4</ecNumber>
    </recommendedName>
    <alternativeName>
        <fullName evidence="2">ATP-sulfurylase large subunit</fullName>
    </alternativeName>
    <alternativeName>
        <fullName evidence="2">Sulfate adenylate transferase</fullName>
        <shortName evidence="2">SAT</shortName>
    </alternativeName>
</protein>
<dbReference type="EC" id="2.7.7.4" evidence="2"/>
<dbReference type="EMBL" id="BA000031">
    <property type="protein sequence ID" value="BAC58556.1"/>
    <property type="molecule type" value="Genomic_DNA"/>
</dbReference>
<dbReference type="RefSeq" id="NP_796672.1">
    <property type="nucleotide sequence ID" value="NC_004603.1"/>
</dbReference>
<dbReference type="RefSeq" id="WP_005454657.1">
    <property type="nucleotide sequence ID" value="NC_004603.1"/>
</dbReference>
<dbReference type="SMR" id="Q87SX9"/>
<dbReference type="GeneID" id="1187760"/>
<dbReference type="KEGG" id="vpa:VP0293"/>
<dbReference type="PATRIC" id="fig|223926.6.peg.284"/>
<dbReference type="eggNOG" id="COG2895">
    <property type="taxonomic scope" value="Bacteria"/>
</dbReference>
<dbReference type="HOGENOM" id="CLU_007265_5_2_6"/>
<dbReference type="UniPathway" id="UPA00140">
    <property type="reaction ID" value="UER00204"/>
</dbReference>
<dbReference type="Proteomes" id="UP000002493">
    <property type="component" value="Chromosome 1"/>
</dbReference>
<dbReference type="GO" id="GO:0005524">
    <property type="term" value="F:ATP binding"/>
    <property type="evidence" value="ECO:0007669"/>
    <property type="project" value="UniProtKB-KW"/>
</dbReference>
<dbReference type="GO" id="GO:0005525">
    <property type="term" value="F:GTP binding"/>
    <property type="evidence" value="ECO:0007669"/>
    <property type="project" value="UniProtKB-UniRule"/>
</dbReference>
<dbReference type="GO" id="GO:0003924">
    <property type="term" value="F:GTPase activity"/>
    <property type="evidence" value="ECO:0007669"/>
    <property type="project" value="InterPro"/>
</dbReference>
<dbReference type="GO" id="GO:0004781">
    <property type="term" value="F:sulfate adenylyltransferase (ATP) activity"/>
    <property type="evidence" value="ECO:0007669"/>
    <property type="project" value="UniProtKB-UniRule"/>
</dbReference>
<dbReference type="GO" id="GO:0070814">
    <property type="term" value="P:hydrogen sulfide biosynthetic process"/>
    <property type="evidence" value="ECO:0007669"/>
    <property type="project" value="UniProtKB-UniRule"/>
</dbReference>
<dbReference type="GO" id="GO:0000103">
    <property type="term" value="P:sulfate assimilation"/>
    <property type="evidence" value="ECO:0007669"/>
    <property type="project" value="UniProtKB-UniRule"/>
</dbReference>
<dbReference type="CDD" id="cd04166">
    <property type="entry name" value="CysN_ATPS"/>
    <property type="match status" value="1"/>
</dbReference>
<dbReference type="CDD" id="cd03695">
    <property type="entry name" value="CysN_NodQ_II"/>
    <property type="match status" value="1"/>
</dbReference>
<dbReference type="CDD" id="cd04095">
    <property type="entry name" value="CysN_NoDQ_III"/>
    <property type="match status" value="1"/>
</dbReference>
<dbReference type="FunFam" id="2.40.30.10:FF:000027">
    <property type="entry name" value="Sulfate adenylyltransferase subunit 1"/>
    <property type="match status" value="1"/>
</dbReference>
<dbReference type="FunFam" id="2.40.30.10:FF:000031">
    <property type="entry name" value="Sulfate adenylyltransferase subunit 1"/>
    <property type="match status" value="1"/>
</dbReference>
<dbReference type="FunFam" id="3.40.50.300:FF:000119">
    <property type="entry name" value="Sulfate adenylyltransferase subunit 1"/>
    <property type="match status" value="1"/>
</dbReference>
<dbReference type="Gene3D" id="3.40.50.300">
    <property type="entry name" value="P-loop containing nucleotide triphosphate hydrolases"/>
    <property type="match status" value="1"/>
</dbReference>
<dbReference type="Gene3D" id="2.40.30.10">
    <property type="entry name" value="Translation factors"/>
    <property type="match status" value="2"/>
</dbReference>
<dbReference type="HAMAP" id="MF_00062">
    <property type="entry name" value="Sulf_adenylyltr_sub1"/>
    <property type="match status" value="1"/>
</dbReference>
<dbReference type="InterPro" id="IPR041757">
    <property type="entry name" value="CysN_GTP-bd"/>
</dbReference>
<dbReference type="InterPro" id="IPR044138">
    <property type="entry name" value="CysN_II"/>
</dbReference>
<dbReference type="InterPro" id="IPR044139">
    <property type="entry name" value="CysN_NoDQ_III"/>
</dbReference>
<dbReference type="InterPro" id="IPR031157">
    <property type="entry name" value="G_TR_CS"/>
</dbReference>
<dbReference type="InterPro" id="IPR054696">
    <property type="entry name" value="GTP-eEF1A_C"/>
</dbReference>
<dbReference type="InterPro" id="IPR027417">
    <property type="entry name" value="P-loop_NTPase"/>
</dbReference>
<dbReference type="InterPro" id="IPR005225">
    <property type="entry name" value="Small_GTP-bd"/>
</dbReference>
<dbReference type="InterPro" id="IPR011779">
    <property type="entry name" value="SO4_adenylTrfase_lsu"/>
</dbReference>
<dbReference type="InterPro" id="IPR000795">
    <property type="entry name" value="T_Tr_GTP-bd_dom"/>
</dbReference>
<dbReference type="InterPro" id="IPR050100">
    <property type="entry name" value="TRAFAC_GTPase_members"/>
</dbReference>
<dbReference type="InterPro" id="IPR009000">
    <property type="entry name" value="Transl_B-barrel_sf"/>
</dbReference>
<dbReference type="InterPro" id="IPR009001">
    <property type="entry name" value="Transl_elong_EF1A/Init_IF2_C"/>
</dbReference>
<dbReference type="NCBIfam" id="TIGR02034">
    <property type="entry name" value="CysN"/>
    <property type="match status" value="1"/>
</dbReference>
<dbReference type="NCBIfam" id="NF003478">
    <property type="entry name" value="PRK05124.1"/>
    <property type="match status" value="1"/>
</dbReference>
<dbReference type="NCBIfam" id="TIGR00231">
    <property type="entry name" value="small_GTP"/>
    <property type="match status" value="1"/>
</dbReference>
<dbReference type="PANTHER" id="PTHR23115">
    <property type="entry name" value="TRANSLATION FACTOR"/>
    <property type="match status" value="1"/>
</dbReference>
<dbReference type="Pfam" id="PF22594">
    <property type="entry name" value="GTP-eEF1A_C"/>
    <property type="match status" value="1"/>
</dbReference>
<dbReference type="Pfam" id="PF00009">
    <property type="entry name" value="GTP_EFTU"/>
    <property type="match status" value="1"/>
</dbReference>
<dbReference type="PRINTS" id="PR00315">
    <property type="entry name" value="ELONGATNFCT"/>
</dbReference>
<dbReference type="SUPFAM" id="SSF50465">
    <property type="entry name" value="EF-Tu/eEF-1alpha/eIF2-gamma C-terminal domain"/>
    <property type="match status" value="1"/>
</dbReference>
<dbReference type="SUPFAM" id="SSF52540">
    <property type="entry name" value="P-loop containing nucleoside triphosphate hydrolases"/>
    <property type="match status" value="1"/>
</dbReference>
<dbReference type="SUPFAM" id="SSF50447">
    <property type="entry name" value="Translation proteins"/>
    <property type="match status" value="1"/>
</dbReference>
<dbReference type="PROSITE" id="PS00301">
    <property type="entry name" value="G_TR_1"/>
    <property type="match status" value="1"/>
</dbReference>
<dbReference type="PROSITE" id="PS51722">
    <property type="entry name" value="G_TR_2"/>
    <property type="match status" value="1"/>
</dbReference>
<organism>
    <name type="scientific">Vibrio parahaemolyticus serotype O3:K6 (strain RIMD 2210633)</name>
    <dbReference type="NCBI Taxonomy" id="223926"/>
    <lineage>
        <taxon>Bacteria</taxon>
        <taxon>Pseudomonadati</taxon>
        <taxon>Pseudomonadota</taxon>
        <taxon>Gammaproteobacteria</taxon>
        <taxon>Vibrionales</taxon>
        <taxon>Vibrionaceae</taxon>
        <taxon>Vibrio</taxon>
    </lineage>
</organism>
<evidence type="ECO:0000250" key="1"/>
<evidence type="ECO:0000255" key="2">
    <source>
        <dbReference type="HAMAP-Rule" id="MF_00062"/>
    </source>
</evidence>
<accession>Q87SX9</accession>
<keyword id="KW-0067">ATP-binding</keyword>
<keyword id="KW-0342">GTP-binding</keyword>
<keyword id="KW-0547">Nucleotide-binding</keyword>
<keyword id="KW-0548">Nucleotidyltransferase</keyword>
<keyword id="KW-0808">Transferase</keyword>
<comment type="function">
    <text evidence="2">With CysD forms the ATP sulfurylase (ATPS) that catalyzes the adenylation of sulfate producing adenosine 5'-phosphosulfate (APS) and diphosphate, the first enzymatic step in sulfur assimilation pathway. APS synthesis involves the formation of a high-energy phosphoric-sulfuric acid anhydride bond driven by GTP hydrolysis by CysN coupled to ATP hydrolysis by CysD.</text>
</comment>
<comment type="catalytic activity">
    <reaction evidence="2">
        <text>sulfate + ATP + H(+) = adenosine 5'-phosphosulfate + diphosphate</text>
        <dbReference type="Rhea" id="RHEA:18133"/>
        <dbReference type="ChEBI" id="CHEBI:15378"/>
        <dbReference type="ChEBI" id="CHEBI:16189"/>
        <dbReference type="ChEBI" id="CHEBI:30616"/>
        <dbReference type="ChEBI" id="CHEBI:33019"/>
        <dbReference type="ChEBI" id="CHEBI:58243"/>
        <dbReference type="EC" id="2.7.7.4"/>
    </reaction>
</comment>
<comment type="pathway">
    <text evidence="2">Sulfur metabolism; hydrogen sulfide biosynthesis; sulfite from sulfate: step 1/3.</text>
</comment>
<comment type="subunit">
    <text evidence="2">Heterodimer composed of CysD, the smaller subunit, and CysN.</text>
</comment>
<comment type="similarity">
    <text evidence="2">Belongs to the TRAFAC class translation factor GTPase superfamily. Classic translation factor GTPase family. CysN/NodQ subfamily.</text>
</comment>
<feature type="chain" id="PRO_0000091533" description="Sulfate adenylyltransferase subunit 1">
    <location>
        <begin position="1"/>
        <end position="476"/>
    </location>
</feature>
<feature type="domain" description="tr-type G">
    <location>
        <begin position="24"/>
        <end position="239"/>
    </location>
</feature>
<feature type="region of interest" description="G1" evidence="1">
    <location>
        <begin position="33"/>
        <end position="40"/>
    </location>
</feature>
<feature type="region of interest" description="G2" evidence="1">
    <location>
        <begin position="91"/>
        <end position="95"/>
    </location>
</feature>
<feature type="region of interest" description="G3" evidence="1">
    <location>
        <begin position="112"/>
        <end position="115"/>
    </location>
</feature>
<feature type="region of interest" description="G4" evidence="1">
    <location>
        <begin position="167"/>
        <end position="170"/>
    </location>
</feature>
<feature type="region of interest" description="G5" evidence="1">
    <location>
        <begin position="205"/>
        <end position="207"/>
    </location>
</feature>
<feature type="binding site" evidence="2">
    <location>
        <begin position="33"/>
        <end position="40"/>
    </location>
    <ligand>
        <name>GTP</name>
        <dbReference type="ChEBI" id="CHEBI:37565"/>
    </ligand>
</feature>
<feature type="binding site" evidence="2">
    <location>
        <begin position="112"/>
        <end position="116"/>
    </location>
    <ligand>
        <name>GTP</name>
        <dbReference type="ChEBI" id="CHEBI:37565"/>
    </ligand>
</feature>
<feature type="binding site" evidence="2">
    <location>
        <begin position="167"/>
        <end position="170"/>
    </location>
    <ligand>
        <name>GTP</name>
        <dbReference type="ChEBI" id="CHEBI:37565"/>
    </ligand>
</feature>
<reference key="1">
    <citation type="journal article" date="2003" name="Lancet">
        <title>Genome sequence of Vibrio parahaemolyticus: a pathogenic mechanism distinct from that of V. cholerae.</title>
        <authorList>
            <person name="Makino K."/>
            <person name="Oshima K."/>
            <person name="Kurokawa K."/>
            <person name="Yokoyama K."/>
            <person name="Uda T."/>
            <person name="Tagomori K."/>
            <person name="Iijima Y."/>
            <person name="Najima M."/>
            <person name="Nakano M."/>
            <person name="Yamashita A."/>
            <person name="Kubota Y."/>
            <person name="Kimura S."/>
            <person name="Yasunaga T."/>
            <person name="Honda T."/>
            <person name="Shinagawa H."/>
            <person name="Hattori M."/>
            <person name="Iida T."/>
        </authorList>
    </citation>
    <scope>NUCLEOTIDE SEQUENCE [LARGE SCALE GENOMIC DNA]</scope>
    <source>
        <strain>RIMD 2210633</strain>
    </source>
</reference>
<proteinExistence type="inferred from homology"/>
<gene>
    <name evidence="2" type="primary">cysN</name>
    <name type="ordered locus">VP0293</name>
</gene>
<name>CYSN_VIBPA</name>
<sequence>MNSAVEAQLAELGIEGYLKQHQYKSLLRFLTCGSVDDGKSTLIGRLLHDSKQIYEDQLAAVHSDSQRVGTTGEKPDLALLVDGLQAEREQGITIDVAYRYFSTQKRKFIIADTPGHEQYTRNMATGASTCDLAVILVDARKGILDQTRRHSFISNLLGLKHFVVAINKMDLVDYSQARFEEIRDEYLKFSENLTGDIDIQIIPISALEGDNVVDKGQNLNWFEGPSLLELLETVDVDYEKGAGEFRFPVQYVNRPNLDFRGFAGTVSSGSVKVGDAIKALPSGKTSTVARIVTFDGDIEEAQAGLAVTLTLNDEIDISRGDLIVLENAQVQTTNHLLADVVWMTEQPLQPGRDYDIKIAGKKTVGHVESIRHQYDINNLSTHGAAELPLNGIGLCEWSLNESVALDNYQDCADTGGFIIIDRLTNVTVGAGMVKESLTELERGLADVSAFELELNALVRKHFPHWEAKDLSQLLKK</sequence>